<name>FTR_METFK</name>
<proteinExistence type="inferred from homology"/>
<dbReference type="EC" id="2.3.1.101" evidence="1"/>
<dbReference type="EMBL" id="CP000284">
    <property type="protein sequence ID" value="ABE49932.1"/>
    <property type="molecule type" value="Genomic_DNA"/>
</dbReference>
<dbReference type="RefSeq" id="WP_011479886.1">
    <property type="nucleotide sequence ID" value="NC_007947.1"/>
</dbReference>
<dbReference type="SMR" id="Q1H0Q5"/>
<dbReference type="STRING" id="265072.Mfla_1664"/>
<dbReference type="KEGG" id="mfa:Mfla_1664"/>
<dbReference type="eggNOG" id="COG2037">
    <property type="taxonomic scope" value="Bacteria"/>
</dbReference>
<dbReference type="HOGENOM" id="CLU_081314_0_0_4"/>
<dbReference type="OrthoDB" id="8841169at2"/>
<dbReference type="UniPathway" id="UPA00562">
    <property type="reaction ID" value="UER00704"/>
</dbReference>
<dbReference type="Proteomes" id="UP000002440">
    <property type="component" value="Chromosome"/>
</dbReference>
<dbReference type="GO" id="GO:0005737">
    <property type="term" value="C:cytoplasm"/>
    <property type="evidence" value="ECO:0007669"/>
    <property type="project" value="UniProtKB-SubCell"/>
</dbReference>
<dbReference type="GO" id="GO:0030270">
    <property type="term" value="F:formylmethanofuran-tetrahydromethanopterin N-formyltransferase activity"/>
    <property type="evidence" value="ECO:0007669"/>
    <property type="project" value="UniProtKB-UniRule"/>
</dbReference>
<dbReference type="GO" id="GO:0046294">
    <property type="term" value="P:formaldehyde catabolic process"/>
    <property type="evidence" value="ECO:0007669"/>
    <property type="project" value="UniProtKB-UniRule"/>
</dbReference>
<dbReference type="GO" id="GO:0006730">
    <property type="term" value="P:one-carbon metabolic process"/>
    <property type="evidence" value="ECO:0007669"/>
    <property type="project" value="UniProtKB-UniRule"/>
</dbReference>
<dbReference type="Gene3D" id="3.30.70.520">
    <property type="match status" value="2"/>
</dbReference>
<dbReference type="HAMAP" id="MF_00579">
    <property type="entry name" value="FTR"/>
    <property type="match status" value="1"/>
</dbReference>
<dbReference type="InterPro" id="IPR014053">
    <property type="entry name" value="ForMFR_H4MPT_ForTrfase"/>
</dbReference>
<dbReference type="InterPro" id="IPR002770">
    <property type="entry name" value="ForMFR_H4MPT_ForTrfase_C"/>
</dbReference>
<dbReference type="InterPro" id="IPR023447">
    <property type="entry name" value="ForMFR_H4MPT_ForTrfase_fd-like"/>
</dbReference>
<dbReference type="InterPro" id="IPR022667">
    <property type="entry name" value="ForMFR_H4MPT_ForTrfase_N"/>
</dbReference>
<dbReference type="NCBIfam" id="TIGR03119">
    <property type="entry name" value="one_C_fhcD"/>
    <property type="match status" value="1"/>
</dbReference>
<dbReference type="NCBIfam" id="NF002554">
    <property type="entry name" value="PRK02114.1"/>
    <property type="match status" value="1"/>
</dbReference>
<dbReference type="Pfam" id="PF01913">
    <property type="entry name" value="FTR"/>
    <property type="match status" value="1"/>
</dbReference>
<dbReference type="Pfam" id="PF02741">
    <property type="entry name" value="FTR_C"/>
    <property type="match status" value="1"/>
</dbReference>
<dbReference type="PIRSF" id="PIRSF006414">
    <property type="entry name" value="Ftr_formyl_trnsf"/>
    <property type="match status" value="1"/>
</dbReference>
<dbReference type="SUPFAM" id="SSF55112">
    <property type="entry name" value="Formylmethanofuran:tetrahydromethanopterin formyltransferase"/>
    <property type="match status" value="2"/>
</dbReference>
<keyword id="KW-0012">Acyltransferase</keyword>
<keyword id="KW-0963">Cytoplasm</keyword>
<keyword id="KW-0554">One-carbon metabolism</keyword>
<keyword id="KW-1185">Reference proteome</keyword>
<keyword id="KW-0808">Transferase</keyword>
<feature type="chain" id="PRO_1000025195" description="Formylmethanofuran--tetrahydromethanopterin formyltransferase">
    <location>
        <begin position="1"/>
        <end position="302"/>
    </location>
</feature>
<gene>
    <name evidence="1" type="primary">ffsA</name>
    <name type="ordered locus">Mfla_1664</name>
</gene>
<reference key="1">
    <citation type="submission" date="2006-03" db="EMBL/GenBank/DDBJ databases">
        <title>Complete sequence of Methylobacillus flagellatus KT.</title>
        <authorList>
            <consortium name="US DOE Joint Genome Institute"/>
            <person name="Copeland A."/>
            <person name="Lucas S."/>
            <person name="Lapidus A."/>
            <person name="Barry K."/>
            <person name="Detter J.C."/>
            <person name="Glavina del Rio T."/>
            <person name="Hammon N."/>
            <person name="Israni S."/>
            <person name="Dalin E."/>
            <person name="Tice H."/>
            <person name="Pitluck S."/>
            <person name="Brettin T."/>
            <person name="Bruce D."/>
            <person name="Han C."/>
            <person name="Tapia R."/>
            <person name="Saunders E."/>
            <person name="Gilna P."/>
            <person name="Schmutz J."/>
            <person name="Larimer F."/>
            <person name="Land M."/>
            <person name="Kyrpides N."/>
            <person name="Anderson I."/>
            <person name="Richardson P."/>
        </authorList>
    </citation>
    <scope>NUCLEOTIDE SEQUENCE [LARGE SCALE GENOMIC DNA]</scope>
    <source>
        <strain>ATCC 51484 / DSM 6875 / VKM B-1610 / KT</strain>
    </source>
</reference>
<evidence type="ECO:0000255" key="1">
    <source>
        <dbReference type="HAMAP-Rule" id="MF_00579"/>
    </source>
</evidence>
<accession>Q1H0Q5</accession>
<organism>
    <name type="scientific">Methylobacillus flagellatus (strain ATCC 51484 / DSM 6875 / VKM B-1610 / KT)</name>
    <dbReference type="NCBI Taxonomy" id="265072"/>
    <lineage>
        <taxon>Bacteria</taxon>
        <taxon>Pseudomonadati</taxon>
        <taxon>Pseudomonadota</taxon>
        <taxon>Betaproteobacteria</taxon>
        <taxon>Nitrosomonadales</taxon>
        <taxon>Methylophilaceae</taxon>
        <taxon>Methylobacillus</taxon>
    </lineage>
</organism>
<protein>
    <recommendedName>
        <fullName evidence="1">Formylmethanofuran--tetrahydromethanopterin formyltransferase</fullName>
        <shortName evidence="1">Ftr</shortName>
        <ecNumber evidence="1">2.3.1.101</ecNumber>
    </recommendedName>
    <alternativeName>
        <fullName evidence="1">H4MPT formyltransferase</fullName>
    </alternativeName>
</protein>
<sequence length="302" mass="32319">MIINGVTIDDTFAEAFGMRGTRVIITAQNLRWAYNAARAMTGFATSVIACGVEAGIERELTPEETPDGRPGVSILMFAMSSAVLIKQLETRMGQCVLTCPTAAAFSGIDEGYPEITRINLGKNLRFFGDGFQISKVFNGKRYWRVPVMDGEFLTEETTGMIRSVGGGNFLILAESQPQALAACEAAIDAMSKIPNVIMPFPGGVVRSGSKVGSKYKALIASTNDAFCPTLKGITKTELSPEIESVMEIVIDGLTDPDIRVAMRAGIAAACELGAKNGIKRISAGNYGGKLGPYHFKLREIMA</sequence>
<comment type="function">
    <text evidence="1">Catalyzes the transfer of a formyl group from 5-formyl tetrahydromethanopterin (5-formyl-H(4)MPT) to methanofuran (MFR) to produce formylmethanofuran (formyl-MFR) and tetrahydromethanopterin (H(4)MPT).</text>
</comment>
<comment type="catalytic activity">
    <reaction evidence="1">
        <text>N-formylmethanofuran + 5,6,7,8-tetrahydromethanopterin + H(+) = N(5)-formyl-5,6,7,8-tetrahydromethanopterin + methanofuran</text>
        <dbReference type="Rhea" id="RHEA:18061"/>
        <dbReference type="ChEBI" id="CHEBI:15378"/>
        <dbReference type="ChEBI" id="CHEBI:57727"/>
        <dbReference type="ChEBI" id="CHEBI:58018"/>
        <dbReference type="ChEBI" id="CHEBI:58103"/>
        <dbReference type="ChEBI" id="CHEBI:58151"/>
        <dbReference type="EC" id="2.3.1.101"/>
    </reaction>
</comment>
<comment type="pathway">
    <text evidence="1">One-carbon metabolism; formaldehyde degradation; formate from formaldehyde (H(4)MPT route): step 4/5.</text>
</comment>
<comment type="subunit">
    <text evidence="1">Homotetramer.</text>
</comment>
<comment type="subcellular location">
    <subcellularLocation>
        <location evidence="1">Cytoplasm</location>
    </subcellularLocation>
</comment>
<comment type="similarity">
    <text evidence="1">Belongs to the FTR family.</text>
</comment>